<sequence>MKVLAAMSGGVDSSVAAARMVDAGHEVVGVHMALSTAPGTLRTGSRGCCSKEDAADARRVADVLGIPFYVWDFAEKFKEDVINDFVSSYARGETPNPCVRCNQQIKFAALSARAVALGFDTVATGHYARLSGGRLRRAVDRDKDQSYVLAVLTAQQLRHAAFPIGDTPKRQIRAEAARRGLAVANKPDSHDICFIPSGNTKAFLGERIGVRRGVVVDADGVVLASHDGVHGFTIGQRRGLGIAGPGPNGRPRYVTAIDADTATVHVGDVTDLDVQTLTGRAPVFTAGAAPSGPVDCVVQVRAHGETVSAVAELIGDALFVQLHAPLRGVARGQTLVLYRPDPAGDEVLGSATIAGASGLSTGGNPGA</sequence>
<gene>
    <name evidence="1" type="primary">mnmA</name>
    <name type="synonym">trmU</name>
    <name type="ordered locus">BCG_3047c</name>
</gene>
<reference key="1">
    <citation type="journal article" date="2007" name="Proc. Natl. Acad. Sci. U.S.A.">
        <title>Genome plasticity of BCG and impact on vaccine efficacy.</title>
        <authorList>
            <person name="Brosch R."/>
            <person name="Gordon S.V."/>
            <person name="Garnier T."/>
            <person name="Eiglmeier K."/>
            <person name="Frigui W."/>
            <person name="Valenti P."/>
            <person name="Dos Santos S."/>
            <person name="Duthoy S."/>
            <person name="Lacroix C."/>
            <person name="Garcia-Pelayo C."/>
            <person name="Inwald J.K."/>
            <person name="Golby P."/>
            <person name="Garcia J.N."/>
            <person name="Hewinson R.G."/>
            <person name="Behr M.A."/>
            <person name="Quail M.A."/>
            <person name="Churcher C."/>
            <person name="Barrell B.G."/>
            <person name="Parkhill J."/>
            <person name="Cole S.T."/>
        </authorList>
    </citation>
    <scope>NUCLEOTIDE SEQUENCE [LARGE SCALE GENOMIC DNA]</scope>
    <source>
        <strain>BCG / Pasteur 1173P2</strain>
    </source>
</reference>
<protein>
    <recommendedName>
        <fullName evidence="1">tRNA-specific 2-thiouridylase MnmA</fullName>
        <ecNumber evidence="1">2.8.1.13</ecNumber>
    </recommendedName>
</protein>
<evidence type="ECO:0000255" key="1">
    <source>
        <dbReference type="HAMAP-Rule" id="MF_00144"/>
    </source>
</evidence>
<name>MNMA_MYCBP</name>
<accession>A1KN20</accession>
<keyword id="KW-0067">ATP-binding</keyword>
<keyword id="KW-0963">Cytoplasm</keyword>
<keyword id="KW-1015">Disulfide bond</keyword>
<keyword id="KW-0547">Nucleotide-binding</keyword>
<keyword id="KW-0694">RNA-binding</keyword>
<keyword id="KW-0808">Transferase</keyword>
<keyword id="KW-0819">tRNA processing</keyword>
<keyword id="KW-0820">tRNA-binding</keyword>
<dbReference type="EC" id="2.8.1.13" evidence="1"/>
<dbReference type="EMBL" id="AM408590">
    <property type="protein sequence ID" value="CAL73036.1"/>
    <property type="molecule type" value="Genomic_DNA"/>
</dbReference>
<dbReference type="RefSeq" id="WP_003415909.1">
    <property type="nucleotide sequence ID" value="NC_008769.1"/>
</dbReference>
<dbReference type="SMR" id="A1KN20"/>
<dbReference type="KEGG" id="mbb:BCG_3047c"/>
<dbReference type="HOGENOM" id="CLU_035188_0_2_11"/>
<dbReference type="Proteomes" id="UP000001472">
    <property type="component" value="Chromosome"/>
</dbReference>
<dbReference type="GO" id="GO:0005737">
    <property type="term" value="C:cytoplasm"/>
    <property type="evidence" value="ECO:0007669"/>
    <property type="project" value="UniProtKB-SubCell"/>
</dbReference>
<dbReference type="GO" id="GO:0005524">
    <property type="term" value="F:ATP binding"/>
    <property type="evidence" value="ECO:0007669"/>
    <property type="project" value="UniProtKB-KW"/>
</dbReference>
<dbReference type="GO" id="GO:0000049">
    <property type="term" value="F:tRNA binding"/>
    <property type="evidence" value="ECO:0007669"/>
    <property type="project" value="UniProtKB-KW"/>
</dbReference>
<dbReference type="GO" id="GO:0103016">
    <property type="term" value="F:tRNA-uridine 2-sulfurtransferase activity"/>
    <property type="evidence" value="ECO:0007669"/>
    <property type="project" value="UniProtKB-EC"/>
</dbReference>
<dbReference type="GO" id="GO:0002143">
    <property type="term" value="P:tRNA wobble position uridine thiolation"/>
    <property type="evidence" value="ECO:0007669"/>
    <property type="project" value="TreeGrafter"/>
</dbReference>
<dbReference type="CDD" id="cd01998">
    <property type="entry name" value="MnmA_TRMU-like"/>
    <property type="match status" value="1"/>
</dbReference>
<dbReference type="FunFam" id="3.40.50.620:FF:000057">
    <property type="entry name" value="tRNA-specific 2-thiouridylase MnmA"/>
    <property type="match status" value="1"/>
</dbReference>
<dbReference type="Gene3D" id="2.30.30.280">
    <property type="entry name" value="Adenine nucleotide alpha hydrolases-like domains"/>
    <property type="match status" value="1"/>
</dbReference>
<dbReference type="Gene3D" id="3.40.50.620">
    <property type="entry name" value="HUPs"/>
    <property type="match status" value="1"/>
</dbReference>
<dbReference type="Gene3D" id="2.40.30.10">
    <property type="entry name" value="Translation factors"/>
    <property type="match status" value="1"/>
</dbReference>
<dbReference type="HAMAP" id="MF_00144">
    <property type="entry name" value="tRNA_thiouridyl_MnmA"/>
    <property type="match status" value="1"/>
</dbReference>
<dbReference type="InterPro" id="IPR004506">
    <property type="entry name" value="MnmA-like"/>
</dbReference>
<dbReference type="InterPro" id="IPR046885">
    <property type="entry name" value="MnmA-like_C"/>
</dbReference>
<dbReference type="InterPro" id="IPR046884">
    <property type="entry name" value="MnmA-like_central"/>
</dbReference>
<dbReference type="InterPro" id="IPR023382">
    <property type="entry name" value="MnmA-like_central_sf"/>
</dbReference>
<dbReference type="InterPro" id="IPR014729">
    <property type="entry name" value="Rossmann-like_a/b/a_fold"/>
</dbReference>
<dbReference type="NCBIfam" id="NF001138">
    <property type="entry name" value="PRK00143.1"/>
    <property type="match status" value="1"/>
</dbReference>
<dbReference type="NCBIfam" id="TIGR00420">
    <property type="entry name" value="trmU"/>
    <property type="match status" value="1"/>
</dbReference>
<dbReference type="PANTHER" id="PTHR11933:SF5">
    <property type="entry name" value="MITOCHONDRIAL TRNA-SPECIFIC 2-THIOURIDYLASE 1"/>
    <property type="match status" value="1"/>
</dbReference>
<dbReference type="PANTHER" id="PTHR11933">
    <property type="entry name" value="TRNA 5-METHYLAMINOMETHYL-2-THIOURIDYLATE -METHYLTRANSFERASE"/>
    <property type="match status" value="1"/>
</dbReference>
<dbReference type="Pfam" id="PF03054">
    <property type="entry name" value="tRNA_Me_trans"/>
    <property type="match status" value="1"/>
</dbReference>
<dbReference type="Pfam" id="PF20258">
    <property type="entry name" value="tRNA_Me_trans_C"/>
    <property type="match status" value="1"/>
</dbReference>
<dbReference type="Pfam" id="PF20259">
    <property type="entry name" value="tRNA_Me_trans_M"/>
    <property type="match status" value="1"/>
</dbReference>
<dbReference type="SUPFAM" id="SSF52402">
    <property type="entry name" value="Adenine nucleotide alpha hydrolases-like"/>
    <property type="match status" value="1"/>
</dbReference>
<feature type="chain" id="PRO_1000009535" description="tRNA-specific 2-thiouridylase MnmA">
    <location>
        <begin position="1"/>
        <end position="367"/>
    </location>
</feature>
<feature type="region of interest" description="Interaction with tRNA" evidence="1">
    <location>
        <begin position="143"/>
        <end position="145"/>
    </location>
</feature>
<feature type="active site" description="Nucleophile" evidence="1">
    <location>
        <position position="101"/>
    </location>
</feature>
<feature type="active site" description="Cysteine persulfide intermediate" evidence="1">
    <location>
        <position position="193"/>
    </location>
</feature>
<feature type="binding site" evidence="1">
    <location>
        <begin position="6"/>
        <end position="13"/>
    </location>
    <ligand>
        <name>ATP</name>
        <dbReference type="ChEBI" id="CHEBI:30616"/>
    </ligand>
</feature>
<feature type="binding site" evidence="1">
    <location>
        <position position="32"/>
    </location>
    <ligand>
        <name>ATP</name>
        <dbReference type="ChEBI" id="CHEBI:30616"/>
    </ligand>
</feature>
<feature type="binding site" evidence="1">
    <location>
        <position position="125"/>
    </location>
    <ligand>
        <name>ATP</name>
        <dbReference type="ChEBI" id="CHEBI:30616"/>
    </ligand>
</feature>
<feature type="site" description="Interaction with tRNA" evidence="1">
    <location>
        <position position="126"/>
    </location>
</feature>
<feature type="site" description="Interaction with tRNA" evidence="1">
    <location>
        <position position="333"/>
    </location>
</feature>
<feature type="disulfide bond" description="Alternate" evidence="1">
    <location>
        <begin position="101"/>
        <end position="193"/>
    </location>
</feature>
<proteinExistence type="inferred from homology"/>
<comment type="function">
    <text evidence="1">Catalyzes the 2-thiolation of uridine at the wobble position (U34) of tRNA, leading to the formation of s(2)U34.</text>
</comment>
<comment type="catalytic activity">
    <reaction evidence="1">
        <text>S-sulfanyl-L-cysteinyl-[protein] + uridine(34) in tRNA + AH2 + ATP = 2-thiouridine(34) in tRNA + L-cysteinyl-[protein] + A + AMP + diphosphate + H(+)</text>
        <dbReference type="Rhea" id="RHEA:47032"/>
        <dbReference type="Rhea" id="RHEA-COMP:10131"/>
        <dbReference type="Rhea" id="RHEA-COMP:11726"/>
        <dbReference type="Rhea" id="RHEA-COMP:11727"/>
        <dbReference type="Rhea" id="RHEA-COMP:11728"/>
        <dbReference type="ChEBI" id="CHEBI:13193"/>
        <dbReference type="ChEBI" id="CHEBI:15378"/>
        <dbReference type="ChEBI" id="CHEBI:17499"/>
        <dbReference type="ChEBI" id="CHEBI:29950"/>
        <dbReference type="ChEBI" id="CHEBI:30616"/>
        <dbReference type="ChEBI" id="CHEBI:33019"/>
        <dbReference type="ChEBI" id="CHEBI:61963"/>
        <dbReference type="ChEBI" id="CHEBI:65315"/>
        <dbReference type="ChEBI" id="CHEBI:87170"/>
        <dbReference type="ChEBI" id="CHEBI:456215"/>
        <dbReference type="EC" id="2.8.1.13"/>
    </reaction>
</comment>
<comment type="subcellular location">
    <subcellularLocation>
        <location evidence="1">Cytoplasm</location>
    </subcellularLocation>
</comment>
<comment type="similarity">
    <text evidence="1">Belongs to the MnmA/TRMU family.</text>
</comment>
<organism>
    <name type="scientific">Mycobacterium bovis (strain BCG / Pasteur 1173P2)</name>
    <dbReference type="NCBI Taxonomy" id="410289"/>
    <lineage>
        <taxon>Bacteria</taxon>
        <taxon>Bacillati</taxon>
        <taxon>Actinomycetota</taxon>
        <taxon>Actinomycetes</taxon>
        <taxon>Mycobacteriales</taxon>
        <taxon>Mycobacteriaceae</taxon>
        <taxon>Mycobacterium</taxon>
        <taxon>Mycobacterium tuberculosis complex</taxon>
    </lineage>
</organism>